<proteinExistence type="evidence at transcript level"/>
<organism>
    <name type="scientific">Callimico goeldii</name>
    <name type="common">Goeldi's marmoset</name>
    <dbReference type="NCBI Taxonomy" id="9495"/>
    <lineage>
        <taxon>Eukaryota</taxon>
        <taxon>Metazoa</taxon>
        <taxon>Chordata</taxon>
        <taxon>Craniata</taxon>
        <taxon>Vertebrata</taxon>
        <taxon>Euteleostomi</taxon>
        <taxon>Mammalia</taxon>
        <taxon>Eutheria</taxon>
        <taxon>Euarchontoglires</taxon>
        <taxon>Primates</taxon>
        <taxon>Haplorrhini</taxon>
        <taxon>Platyrrhini</taxon>
        <taxon>Cebidae</taxon>
        <taxon>Callitrichinae</taxon>
        <taxon>Callimico</taxon>
    </lineage>
</organism>
<feature type="initiator methionine" description="Removed" evidence="1">
    <location>
        <position position="1"/>
    </location>
</feature>
<feature type="chain" id="PRO_0000052902" description="Hemoglobin subunit beta">
    <location>
        <begin position="2"/>
        <end position="147"/>
    </location>
</feature>
<feature type="domain" description="Globin" evidence="3">
    <location>
        <begin position="3"/>
        <end position="147"/>
    </location>
</feature>
<feature type="binding site" description="distal binding residue">
    <location>
        <position position="64"/>
    </location>
    <ligand>
        <name>heme b</name>
        <dbReference type="ChEBI" id="CHEBI:60344"/>
    </ligand>
    <ligandPart>
        <name>Fe</name>
        <dbReference type="ChEBI" id="CHEBI:18248"/>
    </ligandPart>
</feature>
<feature type="binding site" description="proximal binding residue">
    <location>
        <position position="93"/>
    </location>
    <ligand>
        <name>heme b</name>
        <dbReference type="ChEBI" id="CHEBI:60344"/>
    </ligand>
    <ligandPart>
        <name>Fe</name>
        <dbReference type="ChEBI" id="CHEBI:18248"/>
    </ligandPart>
</feature>
<feature type="modified residue" description="N-acetylvaline" evidence="1">
    <location>
        <position position="2"/>
    </location>
</feature>
<feature type="modified residue" description="Phosphothreonine" evidence="2">
    <location>
        <position position="13"/>
    </location>
</feature>
<feature type="modified residue" description="Phosphoserine" evidence="2">
    <location>
        <position position="45"/>
    </location>
</feature>
<feature type="modified residue" description="N6-acetyllysine" evidence="2">
    <location>
        <position position="60"/>
    </location>
</feature>
<feature type="modified residue" description="N6-acetyllysine" evidence="2">
    <location>
        <position position="83"/>
    </location>
</feature>
<feature type="modified residue" description="S-nitrosocysteine" evidence="2">
    <location>
        <position position="94"/>
    </location>
</feature>
<feature type="modified residue" description="N6-acetyllysine" evidence="2">
    <location>
        <position position="145"/>
    </location>
</feature>
<accession>Q6WN21</accession>
<sequence length="147" mass="16092">MVHLTGEEKSAVTTLWGKVNVDEVGGEALGRLLVVYPWTQRFFESFGDLSSPDAVMNNPKVKAHGKKVLGAFSDGLTHLDNLKGTFAQLSELHCDKLHVDPENFRLLGNVLVCVLAHHFGKEFTPTVQAAYQKVVAGVANALAHKYH</sequence>
<reference key="1">
    <citation type="submission" date="2003-04" db="EMBL/GenBank/DDBJ databases">
        <title>The molecular evolution of the primate beta globin gene: an evaluation of gene conversion and phylogeny and an analysis of phylogenetic footprints in noncoding DNA.</title>
        <authorList>
            <person name="Prychitko T.M."/>
            <person name="Goodman M."/>
            <person name="Johnson R.M."/>
        </authorList>
    </citation>
    <scope>NUCLEOTIDE SEQUENCE [GENOMIC DNA]</scope>
</reference>
<dbReference type="EMBL" id="AY279118">
    <property type="protein sequence ID" value="AAQ18226.1"/>
    <property type="molecule type" value="Genomic_DNA"/>
</dbReference>
<dbReference type="SMR" id="Q6WN21"/>
<dbReference type="GO" id="GO:0072562">
    <property type="term" value="C:blood microparticle"/>
    <property type="evidence" value="ECO:0007669"/>
    <property type="project" value="TreeGrafter"/>
</dbReference>
<dbReference type="GO" id="GO:0031838">
    <property type="term" value="C:haptoglobin-hemoglobin complex"/>
    <property type="evidence" value="ECO:0007669"/>
    <property type="project" value="TreeGrafter"/>
</dbReference>
<dbReference type="GO" id="GO:0005833">
    <property type="term" value="C:hemoglobin complex"/>
    <property type="evidence" value="ECO:0007669"/>
    <property type="project" value="InterPro"/>
</dbReference>
<dbReference type="GO" id="GO:0031720">
    <property type="term" value="F:haptoglobin binding"/>
    <property type="evidence" value="ECO:0007669"/>
    <property type="project" value="TreeGrafter"/>
</dbReference>
<dbReference type="GO" id="GO:0020037">
    <property type="term" value="F:heme binding"/>
    <property type="evidence" value="ECO:0007669"/>
    <property type="project" value="InterPro"/>
</dbReference>
<dbReference type="GO" id="GO:0031721">
    <property type="term" value="F:hemoglobin alpha binding"/>
    <property type="evidence" value="ECO:0007669"/>
    <property type="project" value="TreeGrafter"/>
</dbReference>
<dbReference type="GO" id="GO:0046872">
    <property type="term" value="F:metal ion binding"/>
    <property type="evidence" value="ECO:0007669"/>
    <property type="project" value="UniProtKB-KW"/>
</dbReference>
<dbReference type="GO" id="GO:0043177">
    <property type="term" value="F:organic acid binding"/>
    <property type="evidence" value="ECO:0007669"/>
    <property type="project" value="TreeGrafter"/>
</dbReference>
<dbReference type="GO" id="GO:0019825">
    <property type="term" value="F:oxygen binding"/>
    <property type="evidence" value="ECO:0007669"/>
    <property type="project" value="InterPro"/>
</dbReference>
<dbReference type="GO" id="GO:0005344">
    <property type="term" value="F:oxygen carrier activity"/>
    <property type="evidence" value="ECO:0007669"/>
    <property type="project" value="UniProtKB-KW"/>
</dbReference>
<dbReference type="GO" id="GO:0004601">
    <property type="term" value="F:peroxidase activity"/>
    <property type="evidence" value="ECO:0007669"/>
    <property type="project" value="TreeGrafter"/>
</dbReference>
<dbReference type="GO" id="GO:0042744">
    <property type="term" value="P:hydrogen peroxide catabolic process"/>
    <property type="evidence" value="ECO:0007669"/>
    <property type="project" value="TreeGrafter"/>
</dbReference>
<dbReference type="CDD" id="cd08925">
    <property type="entry name" value="Hb-beta-like"/>
    <property type="match status" value="1"/>
</dbReference>
<dbReference type="FunFam" id="1.10.490.10:FF:000001">
    <property type="entry name" value="Hemoglobin subunit beta"/>
    <property type="match status" value="1"/>
</dbReference>
<dbReference type="Gene3D" id="1.10.490.10">
    <property type="entry name" value="Globins"/>
    <property type="match status" value="1"/>
</dbReference>
<dbReference type="InterPro" id="IPR000971">
    <property type="entry name" value="Globin"/>
</dbReference>
<dbReference type="InterPro" id="IPR009050">
    <property type="entry name" value="Globin-like_sf"/>
</dbReference>
<dbReference type="InterPro" id="IPR012292">
    <property type="entry name" value="Globin/Proto"/>
</dbReference>
<dbReference type="InterPro" id="IPR002337">
    <property type="entry name" value="Hemoglobin_b"/>
</dbReference>
<dbReference type="InterPro" id="IPR050056">
    <property type="entry name" value="Hemoglobin_oxygen_transport"/>
</dbReference>
<dbReference type="PANTHER" id="PTHR11442">
    <property type="entry name" value="HEMOGLOBIN FAMILY MEMBER"/>
    <property type="match status" value="1"/>
</dbReference>
<dbReference type="PANTHER" id="PTHR11442:SF42">
    <property type="entry name" value="HEMOGLOBIN SUBUNIT BETA"/>
    <property type="match status" value="1"/>
</dbReference>
<dbReference type="Pfam" id="PF00042">
    <property type="entry name" value="Globin"/>
    <property type="match status" value="1"/>
</dbReference>
<dbReference type="PRINTS" id="PR00814">
    <property type="entry name" value="BETAHAEM"/>
</dbReference>
<dbReference type="SUPFAM" id="SSF46458">
    <property type="entry name" value="Globin-like"/>
    <property type="match status" value="1"/>
</dbReference>
<dbReference type="PROSITE" id="PS01033">
    <property type="entry name" value="GLOBIN"/>
    <property type="match status" value="1"/>
</dbReference>
<name>HBB_CALGO</name>
<gene>
    <name type="primary">HBB</name>
</gene>
<evidence type="ECO:0000250" key="1">
    <source>
        <dbReference type="UniProtKB" id="P02086"/>
    </source>
</evidence>
<evidence type="ECO:0000250" key="2">
    <source>
        <dbReference type="UniProtKB" id="P68871"/>
    </source>
</evidence>
<evidence type="ECO:0000255" key="3">
    <source>
        <dbReference type="PROSITE-ProRule" id="PRU00238"/>
    </source>
</evidence>
<comment type="function">
    <text>Involved in oxygen transport from the lung to the various peripheral tissues.</text>
</comment>
<comment type="subunit">
    <text>Heterotetramer of two alpha chains and two beta chains.</text>
</comment>
<comment type="tissue specificity">
    <text>Red blood cells.</text>
</comment>
<comment type="similarity">
    <text evidence="3">Belongs to the globin family.</text>
</comment>
<protein>
    <recommendedName>
        <fullName>Hemoglobin subunit beta</fullName>
    </recommendedName>
    <alternativeName>
        <fullName>Beta-globin</fullName>
    </alternativeName>
    <alternativeName>
        <fullName>Hemoglobin beta chain</fullName>
    </alternativeName>
</protein>
<keyword id="KW-0007">Acetylation</keyword>
<keyword id="KW-0349">Heme</keyword>
<keyword id="KW-0408">Iron</keyword>
<keyword id="KW-0479">Metal-binding</keyword>
<keyword id="KW-0561">Oxygen transport</keyword>
<keyword id="KW-0597">Phosphoprotein</keyword>
<keyword id="KW-0702">S-nitrosylation</keyword>
<keyword id="KW-0813">Transport</keyword>